<gene>
    <name type="primary">HMGN1</name>
    <name type="synonym">HMG14</name>
</gene>
<accession>P02316</accession>
<accession>Q3T0D1</accession>
<evidence type="ECO:0000250" key="1"/>
<evidence type="ECO:0000250" key="2">
    <source>
        <dbReference type="UniProtKB" id="P05114"/>
    </source>
</evidence>
<evidence type="ECO:0000250" key="3">
    <source>
        <dbReference type="UniProtKB" id="P18608"/>
    </source>
</evidence>
<evidence type="ECO:0000256" key="4">
    <source>
        <dbReference type="SAM" id="MobiDB-lite"/>
    </source>
</evidence>
<evidence type="ECO:0000269" key="5">
    <source>
    </source>
</evidence>
<evidence type="ECO:0000305" key="6"/>
<name>HMGN1_BOVIN</name>
<protein>
    <recommendedName>
        <fullName>Non-histone chromosomal protein HMG-14</fullName>
    </recommendedName>
    <alternativeName>
        <fullName>High mobility group nucleosome-binding domain-containing protein 1</fullName>
    </alternativeName>
</protein>
<organism>
    <name type="scientific">Bos taurus</name>
    <name type="common">Bovine</name>
    <dbReference type="NCBI Taxonomy" id="9913"/>
    <lineage>
        <taxon>Eukaryota</taxon>
        <taxon>Metazoa</taxon>
        <taxon>Chordata</taxon>
        <taxon>Craniata</taxon>
        <taxon>Vertebrata</taxon>
        <taxon>Euteleostomi</taxon>
        <taxon>Mammalia</taxon>
        <taxon>Eutheria</taxon>
        <taxon>Laurasiatheria</taxon>
        <taxon>Artiodactyla</taxon>
        <taxon>Ruminantia</taxon>
        <taxon>Pecora</taxon>
        <taxon>Bovidae</taxon>
        <taxon>Bovinae</taxon>
        <taxon>Bos</taxon>
    </lineage>
</organism>
<dbReference type="EMBL" id="BC102449">
    <property type="protein sequence ID" value="AAI02450.1"/>
    <property type="molecule type" value="mRNA"/>
</dbReference>
<dbReference type="PIR" id="A02654">
    <property type="entry name" value="NSBOH4"/>
</dbReference>
<dbReference type="RefSeq" id="NP_001029944.1">
    <property type="nucleotide sequence ID" value="NM_001034772.1"/>
</dbReference>
<dbReference type="FunCoup" id="P02316">
    <property type="interactions" value="1097"/>
</dbReference>
<dbReference type="STRING" id="9913.ENSBTAP00000008696"/>
<dbReference type="iPTMnet" id="P02316"/>
<dbReference type="PaxDb" id="9913-ENSBTAP00000008696"/>
<dbReference type="PeptideAtlas" id="P02316"/>
<dbReference type="GeneID" id="614915"/>
<dbReference type="KEGG" id="bta:614915"/>
<dbReference type="CTD" id="3150"/>
<dbReference type="eggNOG" id="ENOG502S7UM">
    <property type="taxonomic scope" value="Eukaryota"/>
</dbReference>
<dbReference type="HOGENOM" id="CLU_141985_1_0_1"/>
<dbReference type="InParanoid" id="P02316"/>
<dbReference type="OrthoDB" id="9806797at2759"/>
<dbReference type="TreeFam" id="TF105374"/>
<dbReference type="CD-CODE" id="D7FE2080">
    <property type="entry name" value="Nucleolus"/>
</dbReference>
<dbReference type="Proteomes" id="UP000009136">
    <property type="component" value="Unplaced"/>
</dbReference>
<dbReference type="GO" id="GO:0000785">
    <property type="term" value="C:chromatin"/>
    <property type="evidence" value="ECO:0007669"/>
    <property type="project" value="InterPro"/>
</dbReference>
<dbReference type="GO" id="GO:0005634">
    <property type="term" value="C:nucleus"/>
    <property type="evidence" value="ECO:0000318"/>
    <property type="project" value="GO_Central"/>
</dbReference>
<dbReference type="GO" id="GO:0003682">
    <property type="term" value="F:chromatin binding"/>
    <property type="evidence" value="ECO:0000318"/>
    <property type="project" value="GO_Central"/>
</dbReference>
<dbReference type="GO" id="GO:0031492">
    <property type="term" value="F:nucleosomal DNA binding"/>
    <property type="evidence" value="ECO:0007669"/>
    <property type="project" value="InterPro"/>
</dbReference>
<dbReference type="GO" id="GO:0006325">
    <property type="term" value="P:chromatin organization"/>
    <property type="evidence" value="ECO:0000318"/>
    <property type="project" value="GO_Central"/>
</dbReference>
<dbReference type="InterPro" id="IPR000079">
    <property type="entry name" value="HMGN_fam"/>
</dbReference>
<dbReference type="PANTHER" id="PTHR23087:SF12">
    <property type="entry name" value="NON-HISTONE CHROMOSOMAL PROTEIN HMG-14"/>
    <property type="match status" value="1"/>
</dbReference>
<dbReference type="PANTHER" id="PTHR23087">
    <property type="entry name" value="NONHISTONE CHROMOSOMAL PROTEIN HMG"/>
    <property type="match status" value="1"/>
</dbReference>
<dbReference type="Pfam" id="PF01101">
    <property type="entry name" value="HMG14_17"/>
    <property type="match status" value="1"/>
</dbReference>
<dbReference type="PRINTS" id="PR00925">
    <property type="entry name" value="NONHISHMG17"/>
</dbReference>
<dbReference type="SMART" id="SM00527">
    <property type="entry name" value="HMG17"/>
    <property type="match status" value="1"/>
</dbReference>
<dbReference type="PROSITE" id="PS00355">
    <property type="entry name" value="HMG14_17"/>
    <property type="match status" value="1"/>
</dbReference>
<reference key="1">
    <citation type="submission" date="2005-08" db="EMBL/GenBank/DDBJ databases">
        <authorList>
            <consortium name="NIH - Mammalian Gene Collection (MGC) project"/>
        </authorList>
    </citation>
    <scope>NUCLEOTIDE SEQUENCE [LARGE SCALE MRNA]</scope>
    <source>
        <strain>Crossbred X Angus</strain>
        <tissue>Ileum</tissue>
    </source>
</reference>
<reference key="2">
    <citation type="journal article" date="1979" name="FEBS Lett.">
        <title>The primary structure of the nucleosome-associated chromosomal protein HMG 14.</title>
        <authorList>
            <person name="Walker J.M."/>
            <person name="Goodwin G.H."/>
            <person name="Johns E.W."/>
        </authorList>
    </citation>
    <scope>PROTEIN SEQUENCE OF 2-101</scope>
</reference>
<proteinExistence type="evidence at protein level"/>
<keyword id="KW-0007">Acetylation</keyword>
<keyword id="KW-0013">ADP-ribosylation</keyword>
<keyword id="KW-0903">Direct protein sequencing</keyword>
<keyword id="KW-0238">DNA-binding</keyword>
<keyword id="KW-0539">Nucleus</keyword>
<keyword id="KW-0597">Phosphoprotein</keyword>
<keyword id="KW-1185">Reference proteome</keyword>
<feature type="initiator methionine" description="Removed" evidence="5">
    <location>
        <position position="1"/>
    </location>
</feature>
<feature type="chain" id="PRO_0000206690" description="Non-histone chromosomal protein HMG-14">
    <location>
        <begin position="2"/>
        <end position="101"/>
    </location>
</feature>
<feature type="region of interest" description="Disordered" evidence="4">
    <location>
        <begin position="1"/>
        <end position="101"/>
    </location>
</feature>
<feature type="compositionally biased region" description="Basic and acidic residues" evidence="4">
    <location>
        <begin position="33"/>
        <end position="51"/>
    </location>
</feature>
<feature type="compositionally biased region" description="Basic and acidic residues" evidence="4">
    <location>
        <begin position="70"/>
        <end position="86"/>
    </location>
</feature>
<feature type="modified residue" description="ADP-ribosylserine" evidence="2">
    <location>
        <position position="7"/>
    </location>
</feature>
<feature type="modified residue" description="Phosphoserine" evidence="3">
    <location>
        <position position="8"/>
    </location>
</feature>
<feature type="modified residue" description="N6-acetyllysine" evidence="2">
    <location>
        <position position="14"/>
    </location>
</feature>
<feature type="modified residue" description="Phosphoserine" evidence="2">
    <location>
        <position position="21"/>
    </location>
</feature>
<feature type="modified residue" description="ADP-ribosylserine; alternate" evidence="2">
    <location>
        <position position="25"/>
    </location>
</feature>
<feature type="modified residue" description="Phosphoserine; alternate" evidence="2">
    <location>
        <position position="25"/>
    </location>
</feature>
<feature type="modified residue" description="N6-acetyllysine" evidence="3">
    <location>
        <position position="27"/>
    </location>
</feature>
<feature type="modified residue" description="Phosphothreonine" evidence="3">
    <location>
        <position position="82"/>
    </location>
</feature>
<feature type="modified residue" description="N6-acetyllysine" evidence="2">
    <location>
        <position position="83"/>
    </location>
</feature>
<feature type="modified residue" description="Phosphoserine" evidence="2">
    <location>
        <position position="87"/>
    </location>
</feature>
<feature type="modified residue" description="Phosphoserine" evidence="2">
    <location>
        <position position="90"/>
    </location>
</feature>
<feature type="modified residue" description="Phosphoserine" evidence="2">
    <location>
        <position position="100"/>
    </location>
</feature>
<comment type="function">
    <text evidence="1">Binds to the inner side of the nucleosomal DNA thus altering the interaction between the DNA and the histone octamer. May be involved in the process which maintains transcribable genes in a unique chromatin conformation. Inhibits the phosphorylation of nucleosomal histones H3 and H2A by RPS6KA5/MSK1 and RPS6KA3/RSK2 (By similarity).</text>
</comment>
<comment type="subunit">
    <text evidence="2">Interacts with transcriptional regulator SEHBP.</text>
</comment>
<comment type="subcellular location">
    <subcellularLocation>
        <location>Nucleus</location>
    </subcellularLocation>
</comment>
<comment type="PTM">
    <text evidence="1">Phosphorylation on Ser-21 and Ser-25 weakens binding to nucleosomes and increases the rate of H3 phosphorylation.</text>
</comment>
<comment type="similarity">
    <text evidence="6">Belongs to the HMGN family.</text>
</comment>
<sequence length="101" mass="10831">MPKRKVSSAEGAAKEEPKRRSARLSAKPAPAKVETKPKKAAGKDKSSDKKVQTKGKRGAKGKQAEVANQETKEDLPAENGETKNEESPASDEAEEKEAKSD</sequence>